<name>PG146_VACCC</name>
<accession>P20994</accession>
<evidence type="ECO:0000250" key="1">
    <source>
        <dbReference type="UniProtKB" id="P68714"/>
    </source>
</evidence>
<evidence type="ECO:0000305" key="2"/>
<keyword id="KW-1035">Host cytoplasm</keyword>
<keyword id="KW-1048">Host nucleus</keyword>
<keyword id="KW-0597">Phosphoprotein</keyword>
<keyword id="KW-1185">Reference proteome</keyword>
<keyword id="KW-0946">Virion</keyword>
<comment type="function">
    <text evidence="1">Plays a role in the maturation of immature virions to infectious particles. May also participate in viral transcription.</text>
</comment>
<comment type="subunit">
    <text evidence="1">Interacts with capping enzyme RAP94/OPG109, the two large RNA polymerase subunits RPO147/OPG105 and RPO132/OPG151, the two early transcription factor subunits OPG185 and OPG133, one of the capping enzyme subunits OPG113, the nucleoside triphosphate phosphohydrolase OPG123, two core proteins OPG129 and OPG138, and a virion protein OPG064.</text>
</comment>
<comment type="subcellular location">
    <subcellularLocation>
        <location evidence="1">Virion</location>
    </subcellularLocation>
    <subcellularLocation>
        <location evidence="1">Host cytoplasm</location>
    </subcellularLocation>
    <subcellularLocation>
        <location evidence="1">Host nucleus</location>
    </subcellularLocation>
</comment>
<comment type="similarity">
    <text evidence="2">Belongs to the orthopoxvirus OPG146 family.</text>
</comment>
<organismHost>
    <name type="scientific">Homo sapiens</name>
    <name type="common">Human</name>
    <dbReference type="NCBI Taxonomy" id="9606"/>
</organismHost>
<reference key="1">
    <citation type="journal article" date="1990" name="Virology">
        <title>The complete DNA sequence of vaccinia virus.</title>
        <authorList>
            <person name="Goebel S.J."/>
            <person name="Johnson G.P."/>
            <person name="Perkus M.E."/>
            <person name="Davis S.W."/>
            <person name="Winslow J.P."/>
            <person name="Paoletti E."/>
        </authorList>
    </citation>
    <scope>NUCLEOTIDE SEQUENCE [LARGE SCALE GENOMIC DNA]</scope>
</reference>
<reference key="2">
    <citation type="journal article" date="1990" name="Virology">
        <title>Appendix to 'The complete DNA sequence of vaccinia virus'.</title>
        <authorList>
            <person name="Goebel S.J."/>
            <person name="Johnson G.P."/>
            <person name="Perkus M.E."/>
            <person name="Davis S.W."/>
            <person name="Winslow J.P."/>
            <person name="Paoletti E."/>
        </authorList>
    </citation>
    <scope>NUCLEOTIDE SEQUENCE [LARGE SCALE GENOMIC DNA]</scope>
</reference>
<dbReference type="EMBL" id="M35027">
    <property type="protein sequence ID" value="AAA48141.1"/>
    <property type="molecule type" value="Genomic_DNA"/>
</dbReference>
<dbReference type="PIR" id="C42519">
    <property type="entry name" value="C42519"/>
</dbReference>
<dbReference type="DIP" id="DIP-2186N"/>
<dbReference type="IntAct" id="P20994">
    <property type="interactions" value="1"/>
</dbReference>
<dbReference type="MINT" id="P20994"/>
<dbReference type="Proteomes" id="UP000008269">
    <property type="component" value="Segment"/>
</dbReference>
<dbReference type="GO" id="GO:0030430">
    <property type="term" value="C:host cell cytoplasm"/>
    <property type="evidence" value="ECO:0007669"/>
    <property type="project" value="UniProtKB-SubCell"/>
</dbReference>
<dbReference type="GO" id="GO:0042025">
    <property type="term" value="C:host cell nucleus"/>
    <property type="evidence" value="ECO:0007669"/>
    <property type="project" value="UniProtKB-SubCell"/>
</dbReference>
<dbReference type="GO" id="GO:0044423">
    <property type="term" value="C:virion component"/>
    <property type="evidence" value="ECO:0007669"/>
    <property type="project" value="UniProtKB-KW"/>
</dbReference>
<dbReference type="InterPro" id="IPR007769">
    <property type="entry name" value="Poxvirus_A19"/>
</dbReference>
<dbReference type="Pfam" id="PF05077">
    <property type="entry name" value="DUF678"/>
    <property type="match status" value="1"/>
</dbReference>
<feature type="chain" id="PRO_0000099262" description="Protein OPG146">
    <location>
        <begin position="1"/>
        <end position="77"/>
    </location>
</feature>
<sequence>MDSTNVRSGMKSRKKKPKTTVIDDDDDCMTCSACQSKLVKISDITKVSLDYINTMRGNTLACAACGSSLKLLNDFAS</sequence>
<gene>
    <name type="primary">OPG146</name>
    <name type="ORF">A19L</name>
</gene>
<organism>
    <name type="scientific">Vaccinia virus (strain Copenhagen)</name>
    <name type="common">VACV</name>
    <dbReference type="NCBI Taxonomy" id="10249"/>
    <lineage>
        <taxon>Viruses</taxon>
        <taxon>Varidnaviria</taxon>
        <taxon>Bamfordvirae</taxon>
        <taxon>Nucleocytoviricota</taxon>
        <taxon>Pokkesviricetes</taxon>
        <taxon>Chitovirales</taxon>
        <taxon>Poxviridae</taxon>
        <taxon>Chordopoxvirinae</taxon>
        <taxon>Orthopoxvirus</taxon>
        <taxon>Vaccinia virus</taxon>
    </lineage>
</organism>
<protein>
    <recommendedName>
        <fullName>Protein OPG146</fullName>
    </recommendedName>
</protein>
<proteinExistence type="inferred from homology"/>